<evidence type="ECO:0000250" key="1"/>
<evidence type="ECO:0000250" key="2">
    <source>
        <dbReference type="UniProtKB" id="O60331"/>
    </source>
</evidence>
<evidence type="ECO:0000250" key="3">
    <source>
        <dbReference type="UniProtKB" id="O70161"/>
    </source>
</evidence>
<evidence type="ECO:0000250" key="4">
    <source>
        <dbReference type="UniProtKB" id="P70182"/>
    </source>
</evidence>
<evidence type="ECO:0000255" key="5">
    <source>
        <dbReference type="PROSITE-ProRule" id="PRU00781"/>
    </source>
</evidence>
<evidence type="ECO:0000256" key="6">
    <source>
        <dbReference type="SAM" id="MobiDB-lite"/>
    </source>
</evidence>
<evidence type="ECO:0000269" key="7">
    <source>
    </source>
</evidence>
<evidence type="ECO:0000269" key="8">
    <source>
    </source>
</evidence>
<evidence type="ECO:0000312" key="9">
    <source>
        <dbReference type="RGD" id="1309938"/>
    </source>
</evidence>
<evidence type="ECO:0007744" key="10">
    <source>
    </source>
</evidence>
<feature type="chain" id="PRO_0000185464" description="Phosphatidylinositol 4-phosphate 5-kinase type-1 gamma">
    <location>
        <begin position="1"/>
        <end position="688"/>
    </location>
</feature>
<feature type="domain" description="PIPK" evidence="5">
    <location>
        <begin position="75"/>
        <end position="443"/>
    </location>
</feature>
<feature type="region of interest" description="Disordered" evidence="6">
    <location>
        <begin position="48"/>
        <end position="71"/>
    </location>
</feature>
<feature type="region of interest" description="Disordered" evidence="6">
    <location>
        <begin position="525"/>
        <end position="565"/>
    </location>
</feature>
<feature type="region of interest" description="Disordered" evidence="6">
    <location>
        <begin position="592"/>
        <end position="629"/>
    </location>
</feature>
<feature type="compositionally biased region" description="Low complexity" evidence="6">
    <location>
        <begin position="525"/>
        <end position="534"/>
    </location>
</feature>
<feature type="compositionally biased region" description="Low complexity" evidence="6">
    <location>
        <begin position="602"/>
        <end position="623"/>
    </location>
</feature>
<feature type="modified residue" description="N6-acetyllysine" evidence="2">
    <location>
        <position position="265"/>
    </location>
</feature>
<feature type="modified residue" description="N6-acetyllysine" evidence="2">
    <location>
        <position position="268"/>
    </location>
</feature>
<feature type="modified residue" description="Asymmetric dimethylarginine; alternate" evidence="3">
    <location>
        <position position="459"/>
    </location>
</feature>
<feature type="modified residue" description="Omega-N-methylarginine; alternate" evidence="3">
    <location>
        <position position="459"/>
    </location>
</feature>
<feature type="modified residue" description="Phosphoserine" evidence="10">
    <location>
        <position position="554"/>
    </location>
</feature>
<feature type="modified residue" description="Phosphotyrosine; by EGFR" evidence="3">
    <location>
        <position position="635"/>
    </location>
</feature>
<feature type="modified residue" description="Phosphotyrosine; by CSK" evidence="2">
    <location>
        <position position="671"/>
    </location>
</feature>
<feature type="modified residue" description="Phosphoserine; by CDK5, MAPK1 and CDK1" evidence="2">
    <location>
        <position position="672"/>
    </location>
</feature>
<feature type="modified residue" description="Phosphoserine" evidence="10">
    <location>
        <position position="682"/>
    </location>
</feature>
<feature type="modified residue" description="Phosphoserine" evidence="10">
    <location>
        <position position="686"/>
    </location>
</feature>
<feature type="modified residue" description="Phosphothreonine" evidence="10">
    <location>
        <position position="688"/>
    </location>
</feature>
<feature type="mutagenesis site" description="Reduces activity by over 99%." evidence="8">
    <original>K</original>
    <variation>A</variation>
    <location>
        <position position="188"/>
    </location>
</feature>
<feature type="mutagenesis site" description="Loss of kinase activity." evidence="8">
    <original>D</original>
    <variation>K</variation>
    <location>
        <position position="316"/>
    </location>
</feature>
<dbReference type="EC" id="2.7.1.68" evidence="2"/>
<dbReference type="EMBL" id="AY850259">
    <property type="protein sequence ID" value="AAW34235.1"/>
    <property type="molecule type" value="mRNA"/>
</dbReference>
<dbReference type="RefSeq" id="NP_001009967.2">
    <property type="nucleotide sequence ID" value="NM_001009967.2"/>
</dbReference>
<dbReference type="RefSeq" id="NP_001029142.1">
    <property type="nucleotide sequence ID" value="NM_001033970.1"/>
</dbReference>
<dbReference type="SMR" id="Q5I6B8"/>
<dbReference type="BioGRID" id="260791">
    <property type="interactions" value="2"/>
</dbReference>
<dbReference type="FunCoup" id="Q5I6B8">
    <property type="interactions" value="1875"/>
</dbReference>
<dbReference type="STRING" id="10116.ENSRNOP00000057873"/>
<dbReference type="GlyGen" id="Q5I6B8">
    <property type="glycosylation" value="2 sites"/>
</dbReference>
<dbReference type="iPTMnet" id="Q5I6B8"/>
<dbReference type="PhosphoSitePlus" id="Q5I6B8"/>
<dbReference type="SwissPalm" id="Q5I6B8"/>
<dbReference type="PaxDb" id="10116-ENSRNOP00000057873"/>
<dbReference type="GeneID" id="314641"/>
<dbReference type="KEGG" id="rno:314641"/>
<dbReference type="UCSC" id="RGD:1309938">
    <property type="organism name" value="rat"/>
</dbReference>
<dbReference type="AGR" id="RGD:1309938"/>
<dbReference type="CTD" id="23396"/>
<dbReference type="RGD" id="1309938">
    <property type="gene designation" value="Pip5k1c"/>
</dbReference>
<dbReference type="eggNOG" id="KOG0229">
    <property type="taxonomic scope" value="Eukaryota"/>
</dbReference>
<dbReference type="InParanoid" id="Q5I6B8"/>
<dbReference type="PhylomeDB" id="Q5I6B8"/>
<dbReference type="Reactome" id="R-RNO-1660499">
    <property type="pathway name" value="Synthesis of PIPs at the plasma membrane"/>
</dbReference>
<dbReference type="Reactome" id="R-RNO-399955">
    <property type="pathway name" value="SEMA3A-Plexin repulsion signaling by inhibiting Integrin adhesion"/>
</dbReference>
<dbReference type="Reactome" id="R-RNO-6811558">
    <property type="pathway name" value="PI5P, PP2A and IER3 Regulate PI3K/AKT Signaling"/>
</dbReference>
<dbReference type="Reactome" id="R-RNO-8856828">
    <property type="pathway name" value="Clathrin-mediated endocytosis"/>
</dbReference>
<dbReference type="PRO" id="PR:Q5I6B8"/>
<dbReference type="Proteomes" id="UP000002494">
    <property type="component" value="Unplaced"/>
</dbReference>
<dbReference type="GO" id="GO:0005912">
    <property type="term" value="C:adherens junction"/>
    <property type="evidence" value="ECO:0007669"/>
    <property type="project" value="UniProtKB-SubCell"/>
</dbReference>
<dbReference type="GO" id="GO:0005829">
    <property type="term" value="C:cytosol"/>
    <property type="evidence" value="ECO:0000266"/>
    <property type="project" value="RGD"/>
</dbReference>
<dbReference type="GO" id="GO:0010008">
    <property type="term" value="C:endosome membrane"/>
    <property type="evidence" value="ECO:0000250"/>
    <property type="project" value="UniProtKB"/>
</dbReference>
<dbReference type="GO" id="GO:0005925">
    <property type="term" value="C:focal adhesion"/>
    <property type="evidence" value="ECO:0007669"/>
    <property type="project" value="UniProtKB-SubCell"/>
</dbReference>
<dbReference type="GO" id="GO:0098978">
    <property type="term" value="C:glutamatergic synapse"/>
    <property type="evidence" value="ECO:0000266"/>
    <property type="project" value="RGD"/>
</dbReference>
<dbReference type="GO" id="GO:0001891">
    <property type="term" value="C:phagocytic cup"/>
    <property type="evidence" value="ECO:0007669"/>
    <property type="project" value="UniProtKB-SubCell"/>
</dbReference>
<dbReference type="GO" id="GO:0005886">
    <property type="term" value="C:plasma membrane"/>
    <property type="evidence" value="ECO:0000318"/>
    <property type="project" value="GO_Central"/>
</dbReference>
<dbReference type="GO" id="GO:0014069">
    <property type="term" value="C:postsynaptic density"/>
    <property type="evidence" value="ECO:0000266"/>
    <property type="project" value="RGD"/>
</dbReference>
<dbReference type="GO" id="GO:0098835">
    <property type="term" value="C:presynaptic endocytic zone membrane"/>
    <property type="evidence" value="ECO:0000314"/>
    <property type="project" value="SynGO"/>
</dbReference>
<dbReference type="GO" id="GO:0032587">
    <property type="term" value="C:ruffle membrane"/>
    <property type="evidence" value="ECO:0007669"/>
    <property type="project" value="UniProtKB-SubCell"/>
</dbReference>
<dbReference type="GO" id="GO:0001931">
    <property type="term" value="C:uropod"/>
    <property type="evidence" value="ECO:0007669"/>
    <property type="project" value="UniProtKB-SubCell"/>
</dbReference>
<dbReference type="GO" id="GO:0016308">
    <property type="term" value="F:1-phosphatidylinositol-4-phosphate 5-kinase activity"/>
    <property type="evidence" value="ECO:0000250"/>
    <property type="project" value="UniProtKB"/>
</dbReference>
<dbReference type="GO" id="GO:0005524">
    <property type="term" value="F:ATP binding"/>
    <property type="evidence" value="ECO:0007669"/>
    <property type="project" value="UniProtKB-KW"/>
</dbReference>
<dbReference type="GO" id="GO:0007409">
    <property type="term" value="P:axonogenesis"/>
    <property type="evidence" value="ECO:0000266"/>
    <property type="project" value="RGD"/>
</dbReference>
<dbReference type="GO" id="GO:0006935">
    <property type="term" value="P:chemotaxis"/>
    <property type="evidence" value="ECO:0007669"/>
    <property type="project" value="UniProtKB-KW"/>
</dbReference>
<dbReference type="GO" id="GO:0006887">
    <property type="term" value="P:exocytosis"/>
    <property type="evidence" value="ECO:0007669"/>
    <property type="project" value="UniProtKB-KW"/>
</dbReference>
<dbReference type="GO" id="GO:0006909">
    <property type="term" value="P:phagocytosis"/>
    <property type="evidence" value="ECO:0007669"/>
    <property type="project" value="UniProtKB-KW"/>
</dbReference>
<dbReference type="GO" id="GO:0006661">
    <property type="term" value="P:phosphatidylinositol biosynthetic process"/>
    <property type="evidence" value="ECO:0000266"/>
    <property type="project" value="RGD"/>
</dbReference>
<dbReference type="GO" id="GO:0046488">
    <property type="term" value="P:phosphatidylinositol metabolic process"/>
    <property type="evidence" value="ECO:0000266"/>
    <property type="project" value="RGD"/>
</dbReference>
<dbReference type="GO" id="GO:0046854">
    <property type="term" value="P:phosphatidylinositol phosphate biosynthetic process"/>
    <property type="evidence" value="ECO:0000318"/>
    <property type="project" value="GO_Central"/>
</dbReference>
<dbReference type="GO" id="GO:0070527">
    <property type="term" value="P:platelet aggregation"/>
    <property type="evidence" value="ECO:0000266"/>
    <property type="project" value="RGD"/>
</dbReference>
<dbReference type="GO" id="GO:0099149">
    <property type="term" value="P:regulation of postsynaptic neurotransmitter receptor internalization"/>
    <property type="evidence" value="ECO:0000266"/>
    <property type="project" value="RGD"/>
</dbReference>
<dbReference type="GO" id="GO:1900242">
    <property type="term" value="P:regulation of synaptic vesicle endocytosis"/>
    <property type="evidence" value="ECO:0000266"/>
    <property type="project" value="RGD"/>
</dbReference>
<dbReference type="CDD" id="cd17308">
    <property type="entry name" value="PIPKc_PIP5K1C"/>
    <property type="match status" value="1"/>
</dbReference>
<dbReference type="FunFam" id="3.30.800.10:FF:000001">
    <property type="entry name" value="phosphatidylinositol 4-phosphate 5-kinase type-1 gamma"/>
    <property type="match status" value="1"/>
</dbReference>
<dbReference type="Gene3D" id="3.30.810.10">
    <property type="entry name" value="2-Layer Sandwich"/>
    <property type="match status" value="1"/>
</dbReference>
<dbReference type="Gene3D" id="3.30.800.10">
    <property type="entry name" value="Phosphatidylinositol Phosphate Kinase II Beta"/>
    <property type="match status" value="1"/>
</dbReference>
<dbReference type="InterPro" id="IPR027483">
    <property type="entry name" value="PInositol-4-P-4/5-kinase_C_sf"/>
</dbReference>
<dbReference type="InterPro" id="IPR002498">
    <property type="entry name" value="PInositol-4-P-4/5-kinase_core"/>
</dbReference>
<dbReference type="InterPro" id="IPR027484">
    <property type="entry name" value="PInositol-4-P-5-kinase_N"/>
</dbReference>
<dbReference type="InterPro" id="IPR023610">
    <property type="entry name" value="PInositol-4/5-P-5/4-kinase"/>
</dbReference>
<dbReference type="PANTHER" id="PTHR23086:SF26">
    <property type="entry name" value="PHOSPHATIDYLINOSITOL 4-PHOSPHATE 5-KINASE TYPE-1 GAMMA"/>
    <property type="match status" value="1"/>
</dbReference>
<dbReference type="PANTHER" id="PTHR23086">
    <property type="entry name" value="PHOSPHATIDYLINOSITOL-4-PHOSPHATE 5-KINASE"/>
    <property type="match status" value="1"/>
</dbReference>
<dbReference type="Pfam" id="PF01504">
    <property type="entry name" value="PIP5K"/>
    <property type="match status" value="1"/>
</dbReference>
<dbReference type="SMART" id="SM00330">
    <property type="entry name" value="PIPKc"/>
    <property type="match status" value="1"/>
</dbReference>
<dbReference type="SUPFAM" id="SSF56104">
    <property type="entry name" value="SAICAR synthase-like"/>
    <property type="match status" value="1"/>
</dbReference>
<dbReference type="PROSITE" id="PS51455">
    <property type="entry name" value="PIPK"/>
    <property type="match status" value="1"/>
</dbReference>
<organism>
    <name type="scientific">Rattus norvegicus</name>
    <name type="common">Rat</name>
    <dbReference type="NCBI Taxonomy" id="10116"/>
    <lineage>
        <taxon>Eukaryota</taxon>
        <taxon>Metazoa</taxon>
        <taxon>Chordata</taxon>
        <taxon>Craniata</taxon>
        <taxon>Vertebrata</taxon>
        <taxon>Euteleostomi</taxon>
        <taxon>Mammalia</taxon>
        <taxon>Eutheria</taxon>
        <taxon>Euarchontoglires</taxon>
        <taxon>Glires</taxon>
        <taxon>Rodentia</taxon>
        <taxon>Myomorpha</taxon>
        <taxon>Muroidea</taxon>
        <taxon>Muridae</taxon>
        <taxon>Murinae</taxon>
        <taxon>Rattus</taxon>
    </lineage>
</organism>
<proteinExistence type="evidence at protein level"/>
<sequence>MELEVPDEAESAEAGAVTAEAAWSAESGAAAGMTQKKAILAEAPLVTGQPGPGHGKKLGHRGVDASGETTYKKTTSSTLKGAIQLGIGYTVGNLSSKPERDVLMQDFYVVESIFFPSEGSNLTPAHHFQDFRFKTYAPVAFRYFRELFGIRPDDYLYSLCNEPLIELSNPGASGSVFYVTSDDEFIIKTVMHKEAEFLQKLLPGYYMNLNQNPRTLLPKFYGLYCVQSGGKNIRVVVMNNVLPRVVKMHLKFDLKGSTYKRRASKKEKEKSLPTYKDLDFMQDMPEGLLLDSDTFGALVKTLQRDCLVLESFKIMDYSLLLGVHNIDQQERERQAEGAQSKADEKRPVAQKALYSTARESIQGGAARGEAIETDDTMGGIPAVNGRGERLLLHIGIIDILQSYRFIKKLEHTWKALVHDGDTVSVHRPSFYAERFFKFMSSTVFRKSSSLKSSPSKKGRGALLAVKPLGPTAAFSASQIPSEREDVQYDLRGARSYPTLEDEGRPDLLPCTPPSFEEATTASIATTLSSTSLSIPERSPSDTSEQPRYRRRTQSSGQDGRPQEELHAEDLQKITVQVEPVCGVGVVVPKEQGAGVEVPPSGASAAATVEVDAASQASEPASQASDEEDAPSTDIYFFAHGRYWLFSPRRRRLRAVTPSHTGAPTDGRSWVYSPLHYSARPASDGESDT</sequence>
<name>PI51C_RAT</name>
<comment type="function">
    <text evidence="2 3 4 7">Catalyzes the phosphorylation of phosphatidylinositol 4-phosphate (PtdIns(4)P/PI4P) to form phosphatidylinositol 4,5-bisphosphate (PtdIns(4,5)P2/PIP2), a lipid second messenger that regulates several cellular processes such as signal transduction, vesicle trafficking, actin cytoskeleton dynamics, cell adhesion, and cell motility. PtdIns(4,5)P2 can directly act as a second messenger or can be utilized as a precursor to generate other second messengers: inositol 1,4,5-trisphosphate (IP3), diacylglycerol (DAG) or phosphatidylinositol-3,4,5-trisphosphate (PtdIns(3,4,5)P3/PIP3) (By similarity). PIP5K1A-mediated phosphorylation of PtdIns(4)P is the predominant pathway for PtdIns(4,5)P2 synthesis (By similarity). Together with PIP5K1A, is required for phagocytosis, both enzymes regulating different types of actin remodeling at sequential steps (By similarity). Promotes particle attachment by generating the pool of PtdIns(4,5)P2 that induces controlled actin depolymerization to facilitate Fc-gamma-R clustering. Mediates RAC1-dependent reorganization of actin filaments (By similarity). Required for synaptic vesicle transport (By similarity). Controls the plasma membrane pool of PtdIns(4,5)P2 implicated in synaptic vesicle endocytosis and exocytosis. Plays a role in endocytosis mediated by clathrin and AP-2 (adaptor protein complex 2) (PubMed:12847086). Required for clathrin-coated pits assembly at the synapse (PubMed:12847086). Participates in cell junction assembly. Modulates adherens junctions formation by facilitating CDH1/cadherin trafficking. Required for focal adhesion dynamics. Modulates the targeting of talins (TLN1 and TLN2) to the plasma membrane and their efficient assembly into focal adhesions. Regulates the interaction between talins (TLN1 and TLN2) and beta-integrins (By similarity). Required for uropodium formation and retraction of the cell rear during directed migration. Has a role in growth factor-stimulated directional cell migration and adhesion (By similarity). Required for talin assembly into nascent adhesions forming at the leading edge toward the direction of the growth factor (By similarity). Negative regulator of T-cell activation and adhesion. Negatively regulates integrin alpha-L/beta-2 (LFA-1) polarization and adhesion induced by T-cell receptor. Together with PIP5K1A has a role during embryogenesis and together with PIP5K1B may have a role immediately after birth (By similarity).</text>
</comment>
<comment type="catalytic activity">
    <reaction evidence="2">
        <text>a 1,2-diacyl-sn-glycero-3-phospho-(1D-myo-inositol 4-phosphate) + ATP = a 1,2-diacyl-sn-glycero-3-phospho-(1D-myo-inositol-4,5-bisphosphate) + ADP + H(+)</text>
        <dbReference type="Rhea" id="RHEA:14425"/>
        <dbReference type="ChEBI" id="CHEBI:15378"/>
        <dbReference type="ChEBI" id="CHEBI:30616"/>
        <dbReference type="ChEBI" id="CHEBI:58178"/>
        <dbReference type="ChEBI" id="CHEBI:58456"/>
        <dbReference type="ChEBI" id="CHEBI:456216"/>
        <dbReference type="EC" id="2.7.1.68"/>
    </reaction>
    <physiologicalReaction direction="left-to-right" evidence="2">
        <dbReference type="Rhea" id="RHEA:14426"/>
    </physiologicalReaction>
</comment>
<comment type="catalytic activity">
    <reaction evidence="2">
        <text>1-octadecanoyl-2-(5Z,8Z,11Z,14Z)-eicosatetraenoyl-sn-glycero-3-phospho-1D-myo-inositol 4-phosphate + ATP = 1-octadecanoyl-2-(5Z,8Z,11Z,14Z)-eicosatetraenoyl-sn-glycero-3-phospho-1D-myo-inositol 4,5-bisphosphate + ADP + H(+)</text>
        <dbReference type="Rhea" id="RHEA:40363"/>
        <dbReference type="ChEBI" id="CHEBI:15378"/>
        <dbReference type="ChEBI" id="CHEBI:30616"/>
        <dbReference type="ChEBI" id="CHEBI:77136"/>
        <dbReference type="ChEBI" id="CHEBI:77137"/>
        <dbReference type="ChEBI" id="CHEBI:456216"/>
    </reaction>
    <physiologicalReaction direction="left-to-right" evidence="2">
        <dbReference type="Rhea" id="RHEA:40364"/>
    </physiologicalReaction>
</comment>
<comment type="catalytic activity">
    <reaction evidence="2">
        <text>1-octadecanoyl-2-(9Z)-octadecenoyl-sn-glycero-3-phospho-1D-myo-inositol 4-phosphate + ATP = 1-octadecanoyl-2-(9Z)-octadecenoyl-sn-glycero-3-phospho-1D-myo-inositol 4,5-bisphosphate + ADP + H(+)</text>
        <dbReference type="Rhea" id="RHEA:40367"/>
        <dbReference type="ChEBI" id="CHEBI:15378"/>
        <dbReference type="ChEBI" id="CHEBI:30616"/>
        <dbReference type="ChEBI" id="CHEBI:77139"/>
        <dbReference type="ChEBI" id="CHEBI:77140"/>
        <dbReference type="ChEBI" id="CHEBI:456216"/>
    </reaction>
    <physiologicalReaction direction="left-to-right" evidence="2">
        <dbReference type="Rhea" id="RHEA:40368"/>
    </physiologicalReaction>
</comment>
<comment type="catalytic activity">
    <reaction evidence="2">
        <text>1-octadecanoyl-2-(9Z)-octadecenoyl-sn-glycero-3-phospho-1D-myo-inositol + ATP = 1-octadecanoyl-2-(9Z)-octadecenoyl-sn-glycero-3-phospho-1D-myo-inositol 5-phosphate + ADP + H(+)</text>
        <dbReference type="Rhea" id="RHEA:40379"/>
        <dbReference type="ChEBI" id="CHEBI:15378"/>
        <dbReference type="ChEBI" id="CHEBI:30616"/>
        <dbReference type="ChEBI" id="CHEBI:77163"/>
        <dbReference type="ChEBI" id="CHEBI:77164"/>
        <dbReference type="ChEBI" id="CHEBI:456216"/>
    </reaction>
    <physiologicalReaction direction="left-to-right" evidence="2">
        <dbReference type="Rhea" id="RHEA:40380"/>
    </physiologicalReaction>
</comment>
<comment type="catalytic activity">
    <reaction evidence="2">
        <text>1-octadecanoyl-2-(9Z,12Z)-octadecadienoyl-sn-glycero-3-phospho-1D-myo-inositol + ATP = 1-octadecanoyl-2-(9Z,12Z)-octadecadienoyl-sn-glycero-3-phospho-1D-myo-inositol 5-phosphate + ADP + H(+)</text>
        <dbReference type="Rhea" id="RHEA:40383"/>
        <dbReference type="ChEBI" id="CHEBI:15378"/>
        <dbReference type="ChEBI" id="CHEBI:30616"/>
        <dbReference type="ChEBI" id="CHEBI:77158"/>
        <dbReference type="ChEBI" id="CHEBI:77159"/>
        <dbReference type="ChEBI" id="CHEBI:456216"/>
    </reaction>
    <physiologicalReaction direction="left-to-right" evidence="2">
        <dbReference type="Rhea" id="RHEA:40384"/>
    </physiologicalReaction>
</comment>
<comment type="catalytic activity">
    <reaction evidence="2">
        <text>1-octadecanoyl-2-(5Z,8Z,11Z,14Z-eicosatetraenoyl)-sn-glycero-3-phospho-(1D-myo-inositol) + ATP = 1-octadecanoyl-2-(5Z,8Z,11Z,14Z)-eicosatetraenoyl-sn-glycero-3-phospho-1D-myo-inositol 5-phosphate + ADP + H(+)</text>
        <dbReference type="Rhea" id="RHEA:40375"/>
        <dbReference type="ChEBI" id="CHEBI:15378"/>
        <dbReference type="ChEBI" id="CHEBI:30616"/>
        <dbReference type="ChEBI" id="CHEBI:77160"/>
        <dbReference type="ChEBI" id="CHEBI:133606"/>
        <dbReference type="ChEBI" id="CHEBI:456216"/>
    </reaction>
    <physiologicalReaction direction="left-to-right" evidence="2">
        <dbReference type="Rhea" id="RHEA:40376"/>
    </physiologicalReaction>
</comment>
<comment type="catalytic activity">
    <reaction evidence="2">
        <text>1,2-di-(9Z,12Z)-octadecadienoyl-sn-glycero-3-phospho-1D-myo-inositol + ATP = 1,2-di(9Z,12Z)-octadecadienoyl-sn-glycero-3-phospho-1D-myo-inositol 5-phosphate + ADP + H(+)</text>
        <dbReference type="Rhea" id="RHEA:40387"/>
        <dbReference type="ChEBI" id="CHEBI:15378"/>
        <dbReference type="ChEBI" id="CHEBI:30616"/>
        <dbReference type="ChEBI" id="CHEBI:77165"/>
        <dbReference type="ChEBI" id="CHEBI:77167"/>
        <dbReference type="ChEBI" id="CHEBI:456216"/>
    </reaction>
    <physiologicalReaction direction="left-to-right" evidence="2">
        <dbReference type="Rhea" id="RHEA:40388"/>
    </physiologicalReaction>
</comment>
<comment type="subunit">
    <text evidence="1 2 3 7">Interacts with TLN1 (By similarity). Interacts with TLN2; interaction stimulates 1-phosphatidylinositol-4-phosphate 5-kinase activity (By similarity). May compete with beta-integrins for the same binding site on TLN1 and TLN2 (By similarity). Interacts with ARF6; interaction stimulates 1-phosphatidylinositol-4-phosphate 5-kinase activity (PubMed:12847086). Interacts with AP2B1 (By similarity). Interacts with AP2M1; phosphorylation of PIP5K1C by CSK disrupts the interaction; clathrin competes with PIP5K1C (By similarity). Interacts with CDH1 (By similarity). Interacts with CSK (By similarity). Interacts with PLCG1; interaction is abolished upon EGF stimulation (By similarity). Interacts with LAPTM4B; promotes SNX5 association with LAPTM4B; kinase activity of PIP5K1C is required; interaction is regulated by phosphatidylinositol 4,5-bisphosphate generated by PIP5K1C (By similarity).</text>
</comment>
<comment type="subcellular location">
    <subcellularLocation>
        <location evidence="7">Cell membrane</location>
        <topology evidence="7">Peripheral membrane protein</topology>
        <orientation evidence="7">Cytoplasmic side</orientation>
    </subcellularLocation>
    <subcellularLocation>
        <location evidence="7">Endomembrane system</location>
    </subcellularLocation>
    <subcellularLocation>
        <location evidence="3">Cytoplasm</location>
    </subcellularLocation>
    <subcellularLocation>
        <location evidence="2">Cell junction</location>
        <location evidence="2">Focal adhesion</location>
    </subcellularLocation>
    <subcellularLocation>
        <location evidence="2">Cell junction</location>
        <location evidence="2">Adherens junction</location>
    </subcellularLocation>
    <subcellularLocation>
        <location evidence="7">Cell projection</location>
        <location evidence="7">Ruffle membrane</location>
    </subcellularLocation>
    <subcellularLocation>
        <location evidence="3">Cell projection</location>
        <location evidence="3">Phagocytic cup</location>
    </subcellularLocation>
    <subcellularLocation>
        <location evidence="3">Cell projection</location>
        <location evidence="3">Uropodium</location>
    </subcellularLocation>
</comment>
<comment type="PTM">
    <text evidence="1">Phosphorylation on Ser-672 negatively regulates binding to TLN2 and is strongly stimulated in mitosis. Phosphorylation on Tyr-671 is necessary for targeting to focal adhesions. Phosphorylation on Ser-672 and Tyr-671 are mutually exclusive. Phosphorylated by SYK and CSK. Tyrosine phosphorylation is enhanced by PTK2 signaling. Phosphorylated at Tyr-635 upon EGF stimulation. Some studies suggest that phosphorylation on Tyr-671 enhances binding to tailins (TLN1 and TLN2) (By similarity); others that phosphorylation at Tyr-671 does not directly enhance binding to tailins (TLN1 and TLN2) but may act indirectly by inhibiting phosphorylation at Ser-672.</text>
</comment>
<comment type="PTM">
    <text evidence="1">Acetylation at Lys-265 and Lys-268 seems to decrease lipid kinase activity. Deacetylation of these sites by SIRT1 positively regulates the exocytosis of TSH-containing granules from pituitary cells (By similarity).</text>
</comment>
<keyword id="KW-0007">Acetylation</keyword>
<keyword id="KW-0067">ATP-binding</keyword>
<keyword id="KW-0130">Cell adhesion</keyword>
<keyword id="KW-0965">Cell junction</keyword>
<keyword id="KW-1003">Cell membrane</keyword>
<keyword id="KW-0966">Cell projection</keyword>
<keyword id="KW-0145">Chemotaxis</keyword>
<keyword id="KW-0963">Cytoplasm</keyword>
<keyword id="KW-0254">Endocytosis</keyword>
<keyword id="KW-0268">Exocytosis</keyword>
<keyword id="KW-0418">Kinase</keyword>
<keyword id="KW-0443">Lipid metabolism</keyword>
<keyword id="KW-0472">Membrane</keyword>
<keyword id="KW-0488">Methylation</keyword>
<keyword id="KW-0547">Nucleotide-binding</keyword>
<keyword id="KW-0581">Phagocytosis</keyword>
<keyword id="KW-0597">Phosphoprotein</keyword>
<keyword id="KW-1185">Reference proteome</keyword>
<keyword id="KW-0808">Transferase</keyword>
<accession>Q5I6B8</accession>
<gene>
    <name evidence="9" type="primary">Pip5k1c</name>
</gene>
<protein>
    <recommendedName>
        <fullName evidence="2">Phosphatidylinositol 4-phosphate 5-kinase type-1 gamma</fullName>
        <shortName evidence="2">PIP5K1-gamma</shortName>
        <shortName evidence="2">PtdIns(4)P-5-kinase 1 gamma</shortName>
        <ecNumber evidence="2">2.7.1.68</ecNumber>
    </recommendedName>
    <alternativeName>
        <fullName evidence="2">Phosphatidylinositol 4-phosphate 5-kinase type I gamma</fullName>
        <shortName evidence="2">PIP5KIgamma</shortName>
    </alternativeName>
</protein>
<reference key="1">
    <citation type="journal article" date="2004" name="Biochem. J.">
        <title>A novel neuronal-specific splice variant of Type I phosphatidylinositol 4-phosphate 5-kinase isoform gamma.</title>
        <authorList>
            <person name="Giudici M.-L."/>
            <person name="Emson P.C."/>
            <person name="Irvine R.F."/>
        </authorList>
    </citation>
    <scope>NUCLEOTIDE SEQUENCE [MRNA]</scope>
    <scope>MUTAGENESIS OF LYS-188 AND ASP-316</scope>
    <scope>TISSUE SPECIFICITY</scope>
    <source>
        <tissue>Hippocampus</tissue>
    </source>
</reference>
<reference key="2">
    <citation type="journal article" date="2003" name="J. Cell Biol.">
        <title>ARF6 stimulates clathrin/AP-2 recruitment to synaptic membranes by activating phosphatidylinositol phosphate kinase type Igamma.</title>
        <authorList>
            <person name="Krauss M."/>
            <person name="Kinuta M."/>
            <person name="Wenk M.R."/>
            <person name="De Camilli P."/>
            <person name="Takei K."/>
            <person name="Haucke V."/>
        </authorList>
    </citation>
    <scope>FUNCTION</scope>
    <scope>INTERACTION WITH ARF6</scope>
    <scope>SUBCELLULAR LOCATION</scope>
</reference>
<reference key="3">
    <citation type="journal article" date="2012" name="Nat. Commun.">
        <title>Quantitative maps of protein phosphorylation sites across 14 different rat organs and tissues.</title>
        <authorList>
            <person name="Lundby A."/>
            <person name="Secher A."/>
            <person name="Lage K."/>
            <person name="Nordsborg N.B."/>
            <person name="Dmytriyev A."/>
            <person name="Lundby C."/>
            <person name="Olsen J.V."/>
        </authorList>
    </citation>
    <scope>PHOSPHORYLATION [LARGE SCALE ANALYSIS] AT SER-554; SER-682; SER-686 AND THR-688</scope>
    <scope>IDENTIFICATION BY MASS SPECTROMETRY [LARGE SCALE ANALYSIS]</scope>
</reference>